<sequence length="92" mass="10067">MGIKLINIGFGNIVSANRLIAIVSPESAPIKRIIQEARDRGMLIDATYGRRTRAVIITDSDHVILSAVQPETVAHRLSTKGEEDEISEVEAQ</sequence>
<comment type="similarity">
    <text evidence="1">Belongs to the RemA family.</text>
</comment>
<organism>
    <name type="scientific">Clostridium kluyveri (strain NBRC 12016)</name>
    <dbReference type="NCBI Taxonomy" id="583346"/>
    <lineage>
        <taxon>Bacteria</taxon>
        <taxon>Bacillati</taxon>
        <taxon>Bacillota</taxon>
        <taxon>Clostridia</taxon>
        <taxon>Eubacteriales</taxon>
        <taxon>Clostridiaceae</taxon>
        <taxon>Clostridium</taxon>
    </lineage>
</organism>
<accession>B9E1D6</accession>
<gene>
    <name type="ordered locus">CKR_1260</name>
</gene>
<evidence type="ECO:0000255" key="1">
    <source>
        <dbReference type="HAMAP-Rule" id="MF_01503"/>
    </source>
</evidence>
<protein>
    <recommendedName>
        <fullName evidence="1">Putative regulatory protein CKR_1260</fullName>
    </recommendedName>
</protein>
<reference key="1">
    <citation type="submission" date="2005-09" db="EMBL/GenBank/DDBJ databases">
        <title>Complete genome sequence of Clostridium kluyveri and comparative genomics of Clostridia species.</title>
        <authorList>
            <person name="Inui M."/>
            <person name="Nonaka H."/>
            <person name="Shinoda Y."/>
            <person name="Ikenaga Y."/>
            <person name="Abe M."/>
            <person name="Naito K."/>
            <person name="Vertes A.A."/>
            <person name="Yukawa H."/>
        </authorList>
    </citation>
    <scope>NUCLEOTIDE SEQUENCE [LARGE SCALE GENOMIC DNA]</scope>
    <source>
        <strain>NBRC 12016</strain>
    </source>
</reference>
<feature type="chain" id="PRO_1000185016" description="Putative regulatory protein CKR_1260">
    <location>
        <begin position="1"/>
        <end position="92"/>
    </location>
</feature>
<name>Y1260_CLOK1</name>
<proteinExistence type="inferred from homology"/>
<dbReference type="EMBL" id="AP009049">
    <property type="protein sequence ID" value="BAH06311.1"/>
    <property type="molecule type" value="Genomic_DNA"/>
</dbReference>
<dbReference type="RefSeq" id="WP_012101753.1">
    <property type="nucleotide sequence ID" value="NC_011837.1"/>
</dbReference>
<dbReference type="SMR" id="B9E1D6"/>
<dbReference type="KEGG" id="ckr:CKR_1260"/>
<dbReference type="HOGENOM" id="CLU_165326_0_0_9"/>
<dbReference type="Proteomes" id="UP000007969">
    <property type="component" value="Chromosome"/>
</dbReference>
<dbReference type="HAMAP" id="MF_01503">
    <property type="entry name" value="RemA"/>
    <property type="match status" value="1"/>
</dbReference>
<dbReference type="InterPro" id="IPR007169">
    <property type="entry name" value="RemA-like"/>
</dbReference>
<dbReference type="NCBIfam" id="NF046064">
    <property type="entry name" value="MtxBflmRegRemA"/>
    <property type="match status" value="1"/>
</dbReference>
<dbReference type="NCBIfam" id="NF003315">
    <property type="entry name" value="PRK04323.1"/>
    <property type="match status" value="1"/>
</dbReference>
<dbReference type="PANTHER" id="PTHR38449:SF1">
    <property type="entry name" value="REGULATORY PROTEIN SSL2874-RELATED"/>
    <property type="match status" value="1"/>
</dbReference>
<dbReference type="PANTHER" id="PTHR38449">
    <property type="entry name" value="REGULATORY PROTEIN TM_1690-RELATED"/>
    <property type="match status" value="1"/>
</dbReference>
<dbReference type="Pfam" id="PF04025">
    <property type="entry name" value="RemA-like"/>
    <property type="match status" value="1"/>
</dbReference>